<reference key="1">
    <citation type="journal article" date="2005" name="Proc. Natl. Acad. Sci. U.S.A.">
        <title>Complete genome sequence of the probiotic lactic acid bacterium Lactobacillus acidophilus NCFM.</title>
        <authorList>
            <person name="Altermann E."/>
            <person name="Russell W.M."/>
            <person name="Azcarate-Peril M.A."/>
            <person name="Barrangou R."/>
            <person name="Buck B.L."/>
            <person name="McAuliffe O."/>
            <person name="Souther N."/>
            <person name="Dobson A."/>
            <person name="Duong T."/>
            <person name="Callanan M."/>
            <person name="Lick S."/>
            <person name="Hamrick A."/>
            <person name="Cano R."/>
            <person name="Klaenhammer T.R."/>
        </authorList>
    </citation>
    <scope>NUCLEOTIDE SEQUENCE [LARGE SCALE GENOMIC DNA]</scope>
    <source>
        <strain>ATCC 700396 / NCK56 / N2 / NCFM</strain>
    </source>
</reference>
<comment type="function">
    <text evidence="1">DNA-dependent RNA polymerase catalyzes the transcription of DNA into RNA using the four ribonucleoside triphosphates as substrates.</text>
</comment>
<comment type="catalytic activity">
    <reaction evidence="1">
        <text>RNA(n) + a ribonucleoside 5'-triphosphate = RNA(n+1) + diphosphate</text>
        <dbReference type="Rhea" id="RHEA:21248"/>
        <dbReference type="Rhea" id="RHEA-COMP:14527"/>
        <dbReference type="Rhea" id="RHEA-COMP:17342"/>
        <dbReference type="ChEBI" id="CHEBI:33019"/>
        <dbReference type="ChEBI" id="CHEBI:61557"/>
        <dbReference type="ChEBI" id="CHEBI:140395"/>
        <dbReference type="EC" id="2.7.7.6"/>
    </reaction>
</comment>
<comment type="subunit">
    <text evidence="1">The RNAP catalytic core consists of 2 alpha, 1 beta, 1 beta' and 1 omega subunit. When a sigma factor is associated with the core the holoenzyme is formed, which can initiate transcription.</text>
</comment>
<comment type="similarity">
    <text evidence="1">Belongs to the RNA polymerase beta chain family.</text>
</comment>
<dbReference type="EC" id="2.7.7.6" evidence="1"/>
<dbReference type="EMBL" id="CP000033">
    <property type="protein sequence ID" value="AAV42177.1"/>
    <property type="molecule type" value="Genomic_DNA"/>
</dbReference>
<dbReference type="RefSeq" id="WP_011254108.1">
    <property type="nucleotide sequence ID" value="NC_006814.3"/>
</dbReference>
<dbReference type="RefSeq" id="YP_193208.1">
    <property type="nucleotide sequence ID" value="NC_006814.3"/>
</dbReference>
<dbReference type="SMR" id="Q5FM97"/>
<dbReference type="STRING" id="272621.LBA0284"/>
<dbReference type="KEGG" id="lac:LBA0284"/>
<dbReference type="PATRIC" id="fig|272621.13.peg.269"/>
<dbReference type="eggNOG" id="COG0085">
    <property type="taxonomic scope" value="Bacteria"/>
</dbReference>
<dbReference type="HOGENOM" id="CLU_000524_4_1_9"/>
<dbReference type="OrthoDB" id="9803954at2"/>
<dbReference type="BioCyc" id="LACI272621:G1G49-278-MONOMER"/>
<dbReference type="Proteomes" id="UP000006381">
    <property type="component" value="Chromosome"/>
</dbReference>
<dbReference type="GO" id="GO:0000428">
    <property type="term" value="C:DNA-directed RNA polymerase complex"/>
    <property type="evidence" value="ECO:0007669"/>
    <property type="project" value="UniProtKB-KW"/>
</dbReference>
<dbReference type="GO" id="GO:0003677">
    <property type="term" value="F:DNA binding"/>
    <property type="evidence" value="ECO:0007669"/>
    <property type="project" value="UniProtKB-UniRule"/>
</dbReference>
<dbReference type="GO" id="GO:0003899">
    <property type="term" value="F:DNA-directed RNA polymerase activity"/>
    <property type="evidence" value="ECO:0007669"/>
    <property type="project" value="UniProtKB-UniRule"/>
</dbReference>
<dbReference type="GO" id="GO:0032549">
    <property type="term" value="F:ribonucleoside binding"/>
    <property type="evidence" value="ECO:0007669"/>
    <property type="project" value="InterPro"/>
</dbReference>
<dbReference type="GO" id="GO:0006351">
    <property type="term" value="P:DNA-templated transcription"/>
    <property type="evidence" value="ECO:0007669"/>
    <property type="project" value="UniProtKB-UniRule"/>
</dbReference>
<dbReference type="CDD" id="cd00653">
    <property type="entry name" value="RNA_pol_B_RPB2"/>
    <property type="match status" value="1"/>
</dbReference>
<dbReference type="FunFam" id="3.90.1800.10:FF:000001">
    <property type="entry name" value="DNA-directed RNA polymerase subunit beta"/>
    <property type="match status" value="1"/>
</dbReference>
<dbReference type="Gene3D" id="2.40.50.100">
    <property type="match status" value="1"/>
</dbReference>
<dbReference type="Gene3D" id="2.40.50.150">
    <property type="match status" value="1"/>
</dbReference>
<dbReference type="Gene3D" id="3.90.1100.10">
    <property type="match status" value="2"/>
</dbReference>
<dbReference type="Gene3D" id="2.30.150.10">
    <property type="entry name" value="DNA-directed RNA polymerase, beta subunit, external 1 domain"/>
    <property type="match status" value="1"/>
</dbReference>
<dbReference type="Gene3D" id="2.40.270.10">
    <property type="entry name" value="DNA-directed RNA polymerase, subunit 2, domain 6"/>
    <property type="match status" value="1"/>
</dbReference>
<dbReference type="Gene3D" id="3.90.1800.10">
    <property type="entry name" value="RNA polymerase alpha subunit dimerisation domain"/>
    <property type="match status" value="1"/>
</dbReference>
<dbReference type="Gene3D" id="3.90.1110.10">
    <property type="entry name" value="RNA polymerase Rpb2, domain 2"/>
    <property type="match status" value="1"/>
</dbReference>
<dbReference type="HAMAP" id="MF_01321">
    <property type="entry name" value="RNApol_bact_RpoB"/>
    <property type="match status" value="1"/>
</dbReference>
<dbReference type="InterPro" id="IPR042107">
    <property type="entry name" value="DNA-dir_RNA_pol_bsu_ext_1_sf"/>
</dbReference>
<dbReference type="InterPro" id="IPR019462">
    <property type="entry name" value="DNA-dir_RNA_pol_bsu_external_1"/>
</dbReference>
<dbReference type="InterPro" id="IPR015712">
    <property type="entry name" value="DNA-dir_RNA_pol_su2"/>
</dbReference>
<dbReference type="InterPro" id="IPR007120">
    <property type="entry name" value="DNA-dir_RNAP_su2_dom"/>
</dbReference>
<dbReference type="InterPro" id="IPR037033">
    <property type="entry name" value="DNA-dir_RNAP_su2_hyb_sf"/>
</dbReference>
<dbReference type="InterPro" id="IPR010243">
    <property type="entry name" value="RNA_pol_bsu_bac"/>
</dbReference>
<dbReference type="InterPro" id="IPR007121">
    <property type="entry name" value="RNA_pol_bsu_CS"/>
</dbReference>
<dbReference type="InterPro" id="IPR007644">
    <property type="entry name" value="RNA_pol_bsu_protrusion"/>
</dbReference>
<dbReference type="InterPro" id="IPR007642">
    <property type="entry name" value="RNA_pol_Rpb2_2"/>
</dbReference>
<dbReference type="InterPro" id="IPR037034">
    <property type="entry name" value="RNA_pol_Rpb2_2_sf"/>
</dbReference>
<dbReference type="InterPro" id="IPR007645">
    <property type="entry name" value="RNA_pol_Rpb2_3"/>
</dbReference>
<dbReference type="InterPro" id="IPR007641">
    <property type="entry name" value="RNA_pol_Rpb2_7"/>
</dbReference>
<dbReference type="InterPro" id="IPR014724">
    <property type="entry name" value="RNA_pol_RPB2_OB-fold"/>
</dbReference>
<dbReference type="NCBIfam" id="NF001616">
    <property type="entry name" value="PRK00405.1"/>
    <property type="match status" value="1"/>
</dbReference>
<dbReference type="NCBIfam" id="TIGR02013">
    <property type="entry name" value="rpoB"/>
    <property type="match status" value="1"/>
</dbReference>
<dbReference type="PANTHER" id="PTHR20856">
    <property type="entry name" value="DNA-DIRECTED RNA POLYMERASE I SUBUNIT 2"/>
    <property type="match status" value="1"/>
</dbReference>
<dbReference type="Pfam" id="PF04563">
    <property type="entry name" value="RNA_pol_Rpb2_1"/>
    <property type="match status" value="1"/>
</dbReference>
<dbReference type="Pfam" id="PF04561">
    <property type="entry name" value="RNA_pol_Rpb2_2"/>
    <property type="match status" value="2"/>
</dbReference>
<dbReference type="Pfam" id="PF04565">
    <property type="entry name" value="RNA_pol_Rpb2_3"/>
    <property type="match status" value="1"/>
</dbReference>
<dbReference type="Pfam" id="PF10385">
    <property type="entry name" value="RNA_pol_Rpb2_45"/>
    <property type="match status" value="1"/>
</dbReference>
<dbReference type="Pfam" id="PF00562">
    <property type="entry name" value="RNA_pol_Rpb2_6"/>
    <property type="match status" value="1"/>
</dbReference>
<dbReference type="Pfam" id="PF04560">
    <property type="entry name" value="RNA_pol_Rpb2_7"/>
    <property type="match status" value="1"/>
</dbReference>
<dbReference type="SUPFAM" id="SSF64484">
    <property type="entry name" value="beta and beta-prime subunits of DNA dependent RNA-polymerase"/>
    <property type="match status" value="1"/>
</dbReference>
<dbReference type="PROSITE" id="PS01166">
    <property type="entry name" value="RNA_POL_BETA"/>
    <property type="match status" value="1"/>
</dbReference>
<protein>
    <recommendedName>
        <fullName evidence="1">DNA-directed RNA polymerase subunit beta</fullName>
        <shortName evidence="1">RNAP subunit beta</shortName>
        <ecNumber evidence="1">2.7.7.6</ecNumber>
    </recommendedName>
    <alternativeName>
        <fullName evidence="1">RNA polymerase subunit beta</fullName>
    </alternativeName>
    <alternativeName>
        <fullName evidence="1">Transcriptase subunit beta</fullName>
    </alternativeName>
</protein>
<accession>Q5FM97</accession>
<feature type="chain" id="PRO_0000224064" description="DNA-directed RNA polymerase subunit beta">
    <location>
        <begin position="1"/>
        <end position="1213"/>
    </location>
</feature>
<feature type="region of interest" description="Disordered" evidence="2">
    <location>
        <begin position="1153"/>
        <end position="1213"/>
    </location>
</feature>
<feature type="compositionally biased region" description="Basic and acidic residues" evidence="2">
    <location>
        <begin position="1171"/>
        <end position="1198"/>
    </location>
</feature>
<keyword id="KW-0240">DNA-directed RNA polymerase</keyword>
<keyword id="KW-0548">Nucleotidyltransferase</keyword>
<keyword id="KW-1185">Reference proteome</keyword>
<keyword id="KW-0804">Transcription</keyword>
<keyword id="KW-0808">Transferase</keyword>
<evidence type="ECO:0000255" key="1">
    <source>
        <dbReference type="HAMAP-Rule" id="MF_01321"/>
    </source>
</evidence>
<evidence type="ECO:0000256" key="2">
    <source>
        <dbReference type="SAM" id="MobiDB-lite"/>
    </source>
</evidence>
<organism>
    <name type="scientific">Lactobacillus acidophilus (strain ATCC 700396 / NCK56 / N2 / NCFM)</name>
    <dbReference type="NCBI Taxonomy" id="272621"/>
    <lineage>
        <taxon>Bacteria</taxon>
        <taxon>Bacillati</taxon>
        <taxon>Bacillota</taxon>
        <taxon>Bacilli</taxon>
        <taxon>Lactobacillales</taxon>
        <taxon>Lactobacillaceae</taxon>
        <taxon>Lactobacillus</taxon>
    </lineage>
</organism>
<gene>
    <name evidence="1" type="primary">rpoB</name>
    <name type="ordered locus">LBA0284</name>
</gene>
<proteinExistence type="inferred from homology"/>
<name>RPOB_LACAC</name>
<sequence>MLNGHVVNYGKHRTRRSFSRIKEVLKLPNLTDVQTESYKWFLDKGIKEVFDDIMPISDFSGKLSLEYVGYKLQKPKYTVDEARDHDATYAAPMHVTLKLTNQETGEIKTQDVFFGDLPLMTESGSFIVNGAERVIVSQLVRSPGVYYTGDYDKNGRQIFGTTVIPNRGAWLEYETDAKNVSYVRVDRTRKLPLTVLIRAMGIGSDSEIIEMFGQSDTLQFTLDKDVHKNPADSRVAEALKDIYERLRPGEPKTTDSSRSLLYARFFDPRRYDLAPVGRYKINKKLSLKNRLYGQTLAETLADPDTGEIIVKKDTVVTHEIMDKLAPYLDRDDFKMVTYQPSKEGVLPDPITVQEIKVYSKVDPEREVKLMSNGHIDADVKHLTPADVLASINYFFALQDKIGTTDDIDHLGNRRIRRVGELLQNQFRIGLARMERVVRERMSIQDPSTVTPQQLINIRPIVASIKEFFGSSQLSQFMDQHNPLGELTHKRRMSALGPGGLTRDRAGYEVRDVHYTHYGRLCPIETPEGPNIGLINSLASYAIINKYGFIETPYRRVSWDTHKVTDKIDYLTADEEDNYIIAGANTPLNDDGSFKEDIILARQKEDNVEVTPDKIDYMDVIPKQVVSVASACIPFLENDDSNRALMGANQQRQAAPLINPHSSLVGTGMEYRAAHDSGAALIAKAAGTVEYVDADEIRIRREDGTLDKYTLEKYRRSNNSKSYNQTPNVKLGDHVDESDVIANGPTMDHGELALGQNPLIAFMTWNMYNYEDAIMLSERLVKDDVYTSISIEDYESEARDTKLGPEEITRELPNIGEDALKDLDADGIVRVGAEVHDGDILVGKVTPKGVTELSAEERLLHAIFGEKAREVRDTSLRVPHGGGGIVQDVKVYTREAGDELSPGVNTMVRVYIAQKRKIQVGDKMSGRHGNKGTVAAVMPEEDMPYLPDGTPVDICLNPMGVPSRMNIGQLLELHLGAAARQLGIHVATPVFDGANENDVWDTVRQAGMDKDGKTVIYDGRTGEPFHNRVSVGVMHYLKLTHMVDDKIHARSIGPYSLVTQQPLGGKAQFGGQRFGEMEVWALEAYGAAYTLQEILTYKSDDVVGRVKAYEAIVKGERIPKPGVPESFRVLVKELQSLGLDIRVLDMDHNEIELRDMDEDSSEHLNIDTLSRMAEEQEKKKLAEETGKSENKEDSNETADKPVAPADESDGKVSK</sequence>